<gene>
    <name evidence="1" type="primary">truD</name>
    <name type="ordered locus">ASA_3471</name>
</gene>
<evidence type="ECO:0000255" key="1">
    <source>
        <dbReference type="HAMAP-Rule" id="MF_01082"/>
    </source>
</evidence>
<keyword id="KW-0413">Isomerase</keyword>
<keyword id="KW-0819">tRNA processing</keyword>
<sequence length="352" mass="38320">MLEQLSYLHGVPAAKGILKAEASDFVVVEDLGFEPCGEGEHIFVRVRKTGENTAWVAGLLADAAGVNRNAVTWAGLKDRHAVTEQWFGIHLPGKAEPDLSVVESDSIQILQARRHNRKLRVGYLKGNHFTLRLTGLAQADGLEARLQAIATQGVPNYYGEQRFGRGGNNLEAAKAMFAGKRIKDRNKRSLYLSAARSMLFNAIVSARIEQGLAHQLLAGDCVMLKGSHSIFSEEVLTPELAARLASGDVQLTASLWGRGRLASQGAAAEFEQAVLAPYAEWCDGLEKAGLDQDRRPLLLKPEQMSWLLDGEVLTLSFFLPAGAFATSVVRELMQAEEADHGFRNQSDANSGQ</sequence>
<comment type="function">
    <text evidence="1">Responsible for synthesis of pseudouridine from uracil-13 in transfer RNAs.</text>
</comment>
<comment type="catalytic activity">
    <reaction evidence="1">
        <text>uridine(13) in tRNA = pseudouridine(13) in tRNA</text>
        <dbReference type="Rhea" id="RHEA:42540"/>
        <dbReference type="Rhea" id="RHEA-COMP:10105"/>
        <dbReference type="Rhea" id="RHEA-COMP:10106"/>
        <dbReference type="ChEBI" id="CHEBI:65314"/>
        <dbReference type="ChEBI" id="CHEBI:65315"/>
        <dbReference type="EC" id="5.4.99.27"/>
    </reaction>
</comment>
<comment type="similarity">
    <text evidence="1">Belongs to the pseudouridine synthase TruD family.</text>
</comment>
<proteinExistence type="inferred from homology"/>
<reference key="1">
    <citation type="journal article" date="2008" name="BMC Genomics">
        <title>The genome of Aeromonas salmonicida subsp. salmonicida A449: insights into the evolution of a fish pathogen.</title>
        <authorList>
            <person name="Reith M.E."/>
            <person name="Singh R.K."/>
            <person name="Curtis B."/>
            <person name="Boyd J.M."/>
            <person name="Bouevitch A."/>
            <person name="Kimball J."/>
            <person name="Munholland J."/>
            <person name="Murphy C."/>
            <person name="Sarty D."/>
            <person name="Williams J."/>
            <person name="Nash J.H."/>
            <person name="Johnson S.C."/>
            <person name="Brown L.L."/>
        </authorList>
    </citation>
    <scope>NUCLEOTIDE SEQUENCE [LARGE SCALE GENOMIC DNA]</scope>
    <source>
        <strain>A449</strain>
    </source>
</reference>
<feature type="chain" id="PRO_1000084729" description="tRNA pseudouridine synthase D">
    <location>
        <begin position="1"/>
        <end position="352"/>
    </location>
</feature>
<feature type="domain" description="TRUD" evidence="1">
    <location>
        <begin position="153"/>
        <end position="299"/>
    </location>
</feature>
<feature type="active site" description="Nucleophile" evidence="1">
    <location>
        <position position="78"/>
    </location>
</feature>
<accession>A4SRB7</accession>
<dbReference type="EC" id="5.4.99.27" evidence="1"/>
<dbReference type="EMBL" id="CP000644">
    <property type="protein sequence ID" value="ABO91439.1"/>
    <property type="molecule type" value="Genomic_DNA"/>
</dbReference>
<dbReference type="RefSeq" id="WP_005318884.1">
    <property type="nucleotide sequence ID" value="NC_009348.1"/>
</dbReference>
<dbReference type="SMR" id="A4SRB7"/>
<dbReference type="STRING" id="29491.GCA_000820065_01051"/>
<dbReference type="KEGG" id="asa:ASA_3471"/>
<dbReference type="eggNOG" id="COG0585">
    <property type="taxonomic scope" value="Bacteria"/>
</dbReference>
<dbReference type="HOGENOM" id="CLU_005281_4_0_6"/>
<dbReference type="Proteomes" id="UP000000225">
    <property type="component" value="Chromosome"/>
</dbReference>
<dbReference type="GO" id="GO:0005829">
    <property type="term" value="C:cytosol"/>
    <property type="evidence" value="ECO:0007669"/>
    <property type="project" value="TreeGrafter"/>
</dbReference>
<dbReference type="GO" id="GO:0003723">
    <property type="term" value="F:RNA binding"/>
    <property type="evidence" value="ECO:0007669"/>
    <property type="project" value="InterPro"/>
</dbReference>
<dbReference type="GO" id="GO:0160150">
    <property type="term" value="F:tRNA pseudouridine(13) synthase activity"/>
    <property type="evidence" value="ECO:0007669"/>
    <property type="project" value="UniProtKB-EC"/>
</dbReference>
<dbReference type="GO" id="GO:0031119">
    <property type="term" value="P:tRNA pseudouridine synthesis"/>
    <property type="evidence" value="ECO:0007669"/>
    <property type="project" value="UniProtKB-UniRule"/>
</dbReference>
<dbReference type="CDD" id="cd02575">
    <property type="entry name" value="PseudoU_synth_EcTruD"/>
    <property type="match status" value="1"/>
</dbReference>
<dbReference type="Gene3D" id="3.30.2350.20">
    <property type="entry name" value="TruD, catalytic domain"/>
    <property type="match status" value="1"/>
</dbReference>
<dbReference type="Gene3D" id="3.30.2340.10">
    <property type="entry name" value="TruD, insertion domain"/>
    <property type="match status" value="1"/>
</dbReference>
<dbReference type="HAMAP" id="MF_01082">
    <property type="entry name" value="TruD"/>
    <property type="match status" value="1"/>
</dbReference>
<dbReference type="InterPro" id="IPR020103">
    <property type="entry name" value="PsdUridine_synth_cat_dom_sf"/>
</dbReference>
<dbReference type="InterPro" id="IPR001656">
    <property type="entry name" value="PsdUridine_synth_TruD"/>
</dbReference>
<dbReference type="InterPro" id="IPR020119">
    <property type="entry name" value="PsdUridine_synth_TruD_CS"/>
</dbReference>
<dbReference type="InterPro" id="IPR011760">
    <property type="entry name" value="PsdUridine_synth_TruD_insert"/>
</dbReference>
<dbReference type="InterPro" id="IPR042214">
    <property type="entry name" value="TruD_catalytic"/>
</dbReference>
<dbReference type="InterPro" id="IPR043165">
    <property type="entry name" value="TruD_insert_sf"/>
</dbReference>
<dbReference type="InterPro" id="IPR050170">
    <property type="entry name" value="TruD_pseudoU_synthase"/>
</dbReference>
<dbReference type="NCBIfam" id="TIGR00094">
    <property type="entry name" value="tRNA_TruD_broad"/>
    <property type="match status" value="1"/>
</dbReference>
<dbReference type="PANTHER" id="PTHR47811">
    <property type="entry name" value="TRNA PSEUDOURIDINE SYNTHASE D"/>
    <property type="match status" value="1"/>
</dbReference>
<dbReference type="PANTHER" id="PTHR47811:SF1">
    <property type="entry name" value="TRNA PSEUDOURIDINE SYNTHASE D"/>
    <property type="match status" value="1"/>
</dbReference>
<dbReference type="Pfam" id="PF01142">
    <property type="entry name" value="TruD"/>
    <property type="match status" value="2"/>
</dbReference>
<dbReference type="SUPFAM" id="SSF55120">
    <property type="entry name" value="Pseudouridine synthase"/>
    <property type="match status" value="1"/>
</dbReference>
<dbReference type="PROSITE" id="PS50984">
    <property type="entry name" value="TRUD"/>
    <property type="match status" value="1"/>
</dbReference>
<dbReference type="PROSITE" id="PS01268">
    <property type="entry name" value="UPF0024"/>
    <property type="match status" value="1"/>
</dbReference>
<protein>
    <recommendedName>
        <fullName evidence="1">tRNA pseudouridine synthase D</fullName>
        <ecNumber evidence="1">5.4.99.27</ecNumber>
    </recommendedName>
    <alternativeName>
        <fullName evidence="1">tRNA pseudouridine(13) synthase</fullName>
    </alternativeName>
    <alternativeName>
        <fullName evidence="1">tRNA pseudouridylate synthase D</fullName>
    </alternativeName>
    <alternativeName>
        <fullName evidence="1">tRNA-uridine isomerase D</fullName>
    </alternativeName>
</protein>
<organism>
    <name type="scientific">Aeromonas salmonicida (strain A449)</name>
    <dbReference type="NCBI Taxonomy" id="382245"/>
    <lineage>
        <taxon>Bacteria</taxon>
        <taxon>Pseudomonadati</taxon>
        <taxon>Pseudomonadota</taxon>
        <taxon>Gammaproteobacteria</taxon>
        <taxon>Aeromonadales</taxon>
        <taxon>Aeromonadaceae</taxon>
        <taxon>Aeromonas</taxon>
    </lineage>
</organism>
<name>TRUD_AERS4</name>